<accession>A5IS95</accession>
<reference key="1">
    <citation type="submission" date="2007-05" db="EMBL/GenBank/DDBJ databases">
        <title>Complete sequence of chromosome of Staphylococcus aureus subsp. aureus JH9.</title>
        <authorList>
            <consortium name="US DOE Joint Genome Institute"/>
            <person name="Copeland A."/>
            <person name="Lucas S."/>
            <person name="Lapidus A."/>
            <person name="Barry K."/>
            <person name="Detter J.C."/>
            <person name="Glavina del Rio T."/>
            <person name="Hammon N."/>
            <person name="Israni S."/>
            <person name="Pitluck S."/>
            <person name="Chain P."/>
            <person name="Malfatti S."/>
            <person name="Shin M."/>
            <person name="Vergez L."/>
            <person name="Schmutz J."/>
            <person name="Larimer F."/>
            <person name="Land M."/>
            <person name="Hauser L."/>
            <person name="Kyrpides N."/>
            <person name="Kim E."/>
            <person name="Tomasz A."/>
            <person name="Richardson P."/>
        </authorList>
    </citation>
    <scope>NUCLEOTIDE SEQUENCE [LARGE SCALE GENOMIC DNA]</scope>
    <source>
        <strain>JH9</strain>
    </source>
</reference>
<name>RPOZ_STAA9</name>
<organism>
    <name type="scientific">Staphylococcus aureus (strain JH9)</name>
    <dbReference type="NCBI Taxonomy" id="359786"/>
    <lineage>
        <taxon>Bacteria</taxon>
        <taxon>Bacillati</taxon>
        <taxon>Bacillota</taxon>
        <taxon>Bacilli</taxon>
        <taxon>Bacillales</taxon>
        <taxon>Staphylococcaceae</taxon>
        <taxon>Staphylococcus</taxon>
    </lineage>
</organism>
<comment type="function">
    <text evidence="1">Promotes RNA polymerase assembly. Latches the N- and C-terminal regions of the beta' subunit thereby facilitating its interaction with the beta and alpha subunits.</text>
</comment>
<comment type="catalytic activity">
    <reaction evidence="1">
        <text>RNA(n) + a ribonucleoside 5'-triphosphate = RNA(n+1) + diphosphate</text>
        <dbReference type="Rhea" id="RHEA:21248"/>
        <dbReference type="Rhea" id="RHEA-COMP:14527"/>
        <dbReference type="Rhea" id="RHEA-COMP:17342"/>
        <dbReference type="ChEBI" id="CHEBI:33019"/>
        <dbReference type="ChEBI" id="CHEBI:61557"/>
        <dbReference type="ChEBI" id="CHEBI:140395"/>
        <dbReference type="EC" id="2.7.7.6"/>
    </reaction>
</comment>
<comment type="subunit">
    <text evidence="1">The RNAP catalytic core consists of 2 alpha, 1 beta, 1 beta' and 1 omega subunit. When a sigma factor is associated with the core the holoenzyme is formed, which can initiate transcription.</text>
</comment>
<comment type="similarity">
    <text evidence="1">Belongs to the RNA polymerase subunit omega family.</text>
</comment>
<dbReference type="EC" id="2.7.7.6" evidence="1"/>
<dbReference type="EMBL" id="CP000703">
    <property type="protein sequence ID" value="ABQ49068.1"/>
    <property type="molecule type" value="Genomic_DNA"/>
</dbReference>
<dbReference type="RefSeq" id="WP_000933956.1">
    <property type="nucleotide sequence ID" value="NC_009487.1"/>
</dbReference>
<dbReference type="SMR" id="A5IS95"/>
<dbReference type="KEGG" id="saj:SaurJH9_1269"/>
<dbReference type="HOGENOM" id="CLU_125406_6_0_9"/>
<dbReference type="GO" id="GO:0000428">
    <property type="term" value="C:DNA-directed RNA polymerase complex"/>
    <property type="evidence" value="ECO:0007669"/>
    <property type="project" value="UniProtKB-KW"/>
</dbReference>
<dbReference type="GO" id="GO:0003677">
    <property type="term" value="F:DNA binding"/>
    <property type="evidence" value="ECO:0007669"/>
    <property type="project" value="UniProtKB-UniRule"/>
</dbReference>
<dbReference type="GO" id="GO:0003899">
    <property type="term" value="F:DNA-directed RNA polymerase activity"/>
    <property type="evidence" value="ECO:0007669"/>
    <property type="project" value="UniProtKB-UniRule"/>
</dbReference>
<dbReference type="GO" id="GO:0006351">
    <property type="term" value="P:DNA-templated transcription"/>
    <property type="evidence" value="ECO:0007669"/>
    <property type="project" value="UniProtKB-UniRule"/>
</dbReference>
<dbReference type="Gene3D" id="3.90.940.10">
    <property type="match status" value="1"/>
</dbReference>
<dbReference type="HAMAP" id="MF_00366">
    <property type="entry name" value="RNApol_bact_RpoZ"/>
    <property type="match status" value="1"/>
</dbReference>
<dbReference type="InterPro" id="IPR003716">
    <property type="entry name" value="DNA-dir_RNA_pol_omega"/>
</dbReference>
<dbReference type="InterPro" id="IPR006110">
    <property type="entry name" value="Pol_omega/Rpo6/RPB6"/>
</dbReference>
<dbReference type="InterPro" id="IPR036161">
    <property type="entry name" value="RPB6/omega-like_sf"/>
</dbReference>
<dbReference type="NCBIfam" id="TIGR00690">
    <property type="entry name" value="rpoZ"/>
    <property type="match status" value="1"/>
</dbReference>
<dbReference type="PANTHER" id="PTHR34476">
    <property type="entry name" value="DNA-DIRECTED RNA POLYMERASE SUBUNIT OMEGA"/>
    <property type="match status" value="1"/>
</dbReference>
<dbReference type="PANTHER" id="PTHR34476:SF1">
    <property type="entry name" value="DNA-DIRECTED RNA POLYMERASE SUBUNIT OMEGA"/>
    <property type="match status" value="1"/>
</dbReference>
<dbReference type="Pfam" id="PF01192">
    <property type="entry name" value="RNA_pol_Rpb6"/>
    <property type="match status" value="1"/>
</dbReference>
<dbReference type="SMART" id="SM01409">
    <property type="entry name" value="RNA_pol_Rpb6"/>
    <property type="match status" value="1"/>
</dbReference>
<dbReference type="SUPFAM" id="SSF63562">
    <property type="entry name" value="RPB6/omega subunit-like"/>
    <property type="match status" value="1"/>
</dbReference>
<gene>
    <name evidence="1" type="primary">rpoZ</name>
    <name type="ordered locus">SaurJH9_1269</name>
</gene>
<proteinExistence type="inferred from homology"/>
<evidence type="ECO:0000255" key="1">
    <source>
        <dbReference type="HAMAP-Rule" id="MF_00366"/>
    </source>
</evidence>
<sequence>MLNPPLNQLTSQIKSKYLIATTAAKRAREIDEQPETELLSEYHSFKPVGRALEEIADGKIRPVISSDYYGKE</sequence>
<protein>
    <recommendedName>
        <fullName evidence="1">DNA-directed RNA polymerase subunit omega</fullName>
        <shortName evidence="1">RNAP omega subunit</shortName>
        <ecNumber evidence="1">2.7.7.6</ecNumber>
    </recommendedName>
    <alternativeName>
        <fullName evidence="1">RNA polymerase omega subunit</fullName>
    </alternativeName>
    <alternativeName>
        <fullName evidence="1">Transcriptase subunit omega</fullName>
    </alternativeName>
</protein>
<keyword id="KW-0240">DNA-directed RNA polymerase</keyword>
<keyword id="KW-0548">Nucleotidyltransferase</keyword>
<keyword id="KW-0804">Transcription</keyword>
<keyword id="KW-0808">Transferase</keyword>
<feature type="chain" id="PRO_1000079651" description="DNA-directed RNA polymerase subunit omega">
    <location>
        <begin position="1"/>
        <end position="72"/>
    </location>
</feature>